<comment type="subcellular location">
    <subcellularLocation>
        <location evidence="2">Cell membrane</location>
        <topology evidence="1">Single-pass membrane protein</topology>
    </subcellularLocation>
</comment>
<comment type="similarity">
    <text evidence="2">Belongs to the MmpS family.</text>
</comment>
<feature type="chain" id="PRO_0000427775" description="Probable transport accessory protein MmpS2">
    <location>
        <begin position="1"/>
        <end position="145"/>
    </location>
</feature>
<feature type="transmembrane region" description="Helical" evidence="1">
    <location>
        <begin position="11"/>
        <end position="31"/>
    </location>
</feature>
<name>MMPS2_MYCTO</name>
<keyword id="KW-1003">Cell membrane</keyword>
<keyword id="KW-0472">Membrane</keyword>
<keyword id="KW-1185">Reference proteome</keyword>
<keyword id="KW-0812">Transmembrane</keyword>
<keyword id="KW-1133">Transmembrane helix</keyword>
<gene>
    <name type="primary">mmpS2</name>
    <name type="ordered locus">MT0527</name>
</gene>
<accession>P9WJT2</accession>
<accession>L0T6P6</accession>
<accession>P65376</accession>
<accession>Q11170</accession>
<organism>
    <name type="scientific">Mycobacterium tuberculosis (strain CDC 1551 / Oshkosh)</name>
    <dbReference type="NCBI Taxonomy" id="83331"/>
    <lineage>
        <taxon>Bacteria</taxon>
        <taxon>Bacillati</taxon>
        <taxon>Actinomycetota</taxon>
        <taxon>Actinomycetes</taxon>
        <taxon>Mycobacteriales</taxon>
        <taxon>Mycobacteriaceae</taxon>
        <taxon>Mycobacterium</taxon>
        <taxon>Mycobacterium tuberculosis complex</taxon>
    </lineage>
</organism>
<sequence length="145" mass="15676">MISVSGAVKRMWLLLAIVVVAVVGGLGIYRLHSIFGVHEQPTVMVKPDFDVPLFNPKRVTYEVFGPAKTAKIAYLDPDARVHRLDSVSLPWSVTVETTLPAVSVNLMAQSNADVISCRIIVNGAVKDERSETSPRALTSCQVSSG</sequence>
<proteinExistence type="inferred from homology"/>
<reference key="1">
    <citation type="journal article" date="2002" name="J. Bacteriol.">
        <title>Whole-genome comparison of Mycobacterium tuberculosis clinical and laboratory strains.</title>
        <authorList>
            <person name="Fleischmann R.D."/>
            <person name="Alland D."/>
            <person name="Eisen J.A."/>
            <person name="Carpenter L."/>
            <person name="White O."/>
            <person name="Peterson J.D."/>
            <person name="DeBoy R.T."/>
            <person name="Dodson R.J."/>
            <person name="Gwinn M.L."/>
            <person name="Haft D.H."/>
            <person name="Hickey E.K."/>
            <person name="Kolonay J.F."/>
            <person name="Nelson W.C."/>
            <person name="Umayam L.A."/>
            <person name="Ermolaeva M.D."/>
            <person name="Salzberg S.L."/>
            <person name="Delcher A."/>
            <person name="Utterback T.R."/>
            <person name="Weidman J.F."/>
            <person name="Khouri H.M."/>
            <person name="Gill J."/>
            <person name="Mikula A."/>
            <person name="Bishai W."/>
            <person name="Jacobs W.R. Jr."/>
            <person name="Venter J.C."/>
            <person name="Fraser C.M."/>
        </authorList>
    </citation>
    <scope>NUCLEOTIDE SEQUENCE [LARGE SCALE GENOMIC DNA]</scope>
    <source>
        <strain>CDC 1551 / Oshkosh</strain>
    </source>
</reference>
<evidence type="ECO:0000255" key="1"/>
<evidence type="ECO:0000305" key="2"/>
<dbReference type="EMBL" id="AE000516">
    <property type="protein sequence ID" value="AAK44750.1"/>
    <property type="molecule type" value="Genomic_DNA"/>
</dbReference>
<dbReference type="PIR" id="E70746">
    <property type="entry name" value="E70746"/>
</dbReference>
<dbReference type="SMR" id="P9WJT2"/>
<dbReference type="KEGG" id="mtc:MT0527"/>
<dbReference type="HOGENOM" id="CLU_119497_0_0_11"/>
<dbReference type="Proteomes" id="UP000001020">
    <property type="component" value="Chromosome"/>
</dbReference>
<dbReference type="GO" id="GO:0005886">
    <property type="term" value="C:plasma membrane"/>
    <property type="evidence" value="ECO:0007669"/>
    <property type="project" value="UniProtKB-SubCell"/>
</dbReference>
<dbReference type="Gene3D" id="2.60.40.2880">
    <property type="entry name" value="MmpS1-5, C-terminal soluble domain"/>
    <property type="match status" value="1"/>
</dbReference>
<dbReference type="InterPro" id="IPR008693">
    <property type="entry name" value="MmpS"/>
</dbReference>
<dbReference type="InterPro" id="IPR038468">
    <property type="entry name" value="MmpS_C"/>
</dbReference>
<dbReference type="Pfam" id="PF05423">
    <property type="entry name" value="Mycobact_memb"/>
    <property type="match status" value="1"/>
</dbReference>
<protein>
    <recommendedName>
        <fullName evidence="2">Probable transport accessory protein MmpS2</fullName>
    </recommendedName>
</protein>